<dbReference type="EC" id="3.5.4.25" evidence="1"/>
<dbReference type="EMBL" id="L42023">
    <property type="protein sequence ID" value="AAC21880.1"/>
    <property type="status" value="ALT_INIT"/>
    <property type="molecule type" value="Genomic_DNA"/>
</dbReference>
<dbReference type="PIR" id="A64055">
    <property type="entry name" value="A64055"/>
</dbReference>
<dbReference type="RefSeq" id="NP_438380.2">
    <property type="nucleotide sequence ID" value="NC_000907.1"/>
</dbReference>
<dbReference type="SMR" id="P44571"/>
<dbReference type="STRING" id="71421.HI_0212"/>
<dbReference type="EnsemblBacteria" id="AAC21880">
    <property type="protein sequence ID" value="AAC21880"/>
    <property type="gene ID" value="HI_0212"/>
</dbReference>
<dbReference type="KEGG" id="hin:HI_0212"/>
<dbReference type="PATRIC" id="fig|71421.8.peg.216"/>
<dbReference type="eggNOG" id="COG0807">
    <property type="taxonomic scope" value="Bacteria"/>
</dbReference>
<dbReference type="HOGENOM" id="CLU_020273_2_1_6"/>
<dbReference type="OrthoDB" id="9793111at2"/>
<dbReference type="PhylomeDB" id="P44571"/>
<dbReference type="BioCyc" id="HINF71421:G1GJ1-222-MONOMER"/>
<dbReference type="UniPathway" id="UPA00275">
    <property type="reaction ID" value="UER00400"/>
</dbReference>
<dbReference type="Proteomes" id="UP000000579">
    <property type="component" value="Chromosome"/>
</dbReference>
<dbReference type="GO" id="GO:0005829">
    <property type="term" value="C:cytosol"/>
    <property type="evidence" value="ECO:0000318"/>
    <property type="project" value="GO_Central"/>
</dbReference>
<dbReference type="GO" id="GO:0005525">
    <property type="term" value="F:GTP binding"/>
    <property type="evidence" value="ECO:0007669"/>
    <property type="project" value="UniProtKB-KW"/>
</dbReference>
<dbReference type="GO" id="GO:0003935">
    <property type="term" value="F:GTP cyclohydrolase II activity"/>
    <property type="evidence" value="ECO:0000318"/>
    <property type="project" value="GO_Central"/>
</dbReference>
<dbReference type="GO" id="GO:0008270">
    <property type="term" value="F:zinc ion binding"/>
    <property type="evidence" value="ECO:0007669"/>
    <property type="project" value="UniProtKB-UniRule"/>
</dbReference>
<dbReference type="GO" id="GO:0009231">
    <property type="term" value="P:riboflavin biosynthetic process"/>
    <property type="evidence" value="ECO:0000318"/>
    <property type="project" value="GO_Central"/>
</dbReference>
<dbReference type="CDD" id="cd00641">
    <property type="entry name" value="GTP_cyclohydro2"/>
    <property type="match status" value="1"/>
</dbReference>
<dbReference type="FunFam" id="3.40.50.10990:FF:000002">
    <property type="entry name" value="GTP cyclohydrolase-2"/>
    <property type="match status" value="1"/>
</dbReference>
<dbReference type="Gene3D" id="3.40.50.10990">
    <property type="entry name" value="GTP cyclohydrolase II"/>
    <property type="match status" value="1"/>
</dbReference>
<dbReference type="HAMAP" id="MF_00179">
    <property type="entry name" value="RibA"/>
    <property type="match status" value="1"/>
</dbReference>
<dbReference type="InterPro" id="IPR032677">
    <property type="entry name" value="GTP_cyclohydro_II"/>
</dbReference>
<dbReference type="InterPro" id="IPR000926">
    <property type="entry name" value="RibA"/>
</dbReference>
<dbReference type="InterPro" id="IPR036144">
    <property type="entry name" value="RibA-like_sf"/>
</dbReference>
<dbReference type="NCBIfam" id="NF001591">
    <property type="entry name" value="PRK00393.1"/>
    <property type="match status" value="1"/>
</dbReference>
<dbReference type="NCBIfam" id="TIGR00505">
    <property type="entry name" value="ribA"/>
    <property type="match status" value="1"/>
</dbReference>
<dbReference type="PANTHER" id="PTHR21327:SF18">
    <property type="entry name" value="3,4-DIHYDROXY-2-BUTANONE 4-PHOSPHATE SYNTHASE"/>
    <property type="match status" value="1"/>
</dbReference>
<dbReference type="PANTHER" id="PTHR21327">
    <property type="entry name" value="GTP CYCLOHYDROLASE II-RELATED"/>
    <property type="match status" value="1"/>
</dbReference>
<dbReference type="Pfam" id="PF00925">
    <property type="entry name" value="GTP_cyclohydro2"/>
    <property type="match status" value="1"/>
</dbReference>
<dbReference type="SUPFAM" id="SSF142695">
    <property type="entry name" value="RibA-like"/>
    <property type="match status" value="1"/>
</dbReference>
<feature type="chain" id="PRO_0000151758" description="GTP cyclohydrolase-2">
    <location>
        <begin position="1"/>
        <end position="216"/>
    </location>
</feature>
<feature type="active site" description="Proton acceptor" evidence="1">
    <location>
        <position position="128"/>
    </location>
</feature>
<feature type="active site" description="Nucleophile" evidence="1">
    <location>
        <position position="130"/>
    </location>
</feature>
<feature type="binding site" evidence="1">
    <location>
        <begin position="51"/>
        <end position="55"/>
    </location>
    <ligand>
        <name>GTP</name>
        <dbReference type="ChEBI" id="CHEBI:37565"/>
    </ligand>
</feature>
<feature type="binding site" evidence="1">
    <location>
        <position position="56"/>
    </location>
    <ligand>
        <name>Zn(2+)</name>
        <dbReference type="ChEBI" id="CHEBI:29105"/>
        <note>catalytic</note>
    </ligand>
</feature>
<feature type="binding site" evidence="1">
    <location>
        <position position="67"/>
    </location>
    <ligand>
        <name>Zn(2+)</name>
        <dbReference type="ChEBI" id="CHEBI:29105"/>
        <note>catalytic</note>
    </ligand>
</feature>
<feature type="binding site" evidence="1">
    <location>
        <position position="69"/>
    </location>
    <ligand>
        <name>Zn(2+)</name>
        <dbReference type="ChEBI" id="CHEBI:29105"/>
        <note>catalytic</note>
    </ligand>
</feature>
<feature type="binding site" evidence="1">
    <location>
        <position position="72"/>
    </location>
    <ligand>
        <name>GTP</name>
        <dbReference type="ChEBI" id="CHEBI:37565"/>
    </ligand>
</feature>
<feature type="binding site" evidence="1">
    <location>
        <begin position="94"/>
        <end position="96"/>
    </location>
    <ligand>
        <name>GTP</name>
        <dbReference type="ChEBI" id="CHEBI:37565"/>
    </ligand>
</feature>
<feature type="binding site" evidence="1">
    <location>
        <position position="116"/>
    </location>
    <ligand>
        <name>GTP</name>
        <dbReference type="ChEBI" id="CHEBI:37565"/>
    </ligand>
</feature>
<feature type="binding site" evidence="1">
    <location>
        <position position="151"/>
    </location>
    <ligand>
        <name>GTP</name>
        <dbReference type="ChEBI" id="CHEBI:37565"/>
    </ligand>
</feature>
<feature type="binding site" evidence="1">
    <location>
        <position position="156"/>
    </location>
    <ligand>
        <name>GTP</name>
        <dbReference type="ChEBI" id="CHEBI:37565"/>
    </ligand>
</feature>
<evidence type="ECO:0000255" key="1">
    <source>
        <dbReference type="HAMAP-Rule" id="MF_00179"/>
    </source>
</evidence>
<evidence type="ECO:0000305" key="2"/>
<keyword id="KW-0342">GTP-binding</keyword>
<keyword id="KW-0378">Hydrolase</keyword>
<keyword id="KW-0479">Metal-binding</keyword>
<keyword id="KW-0547">Nucleotide-binding</keyword>
<keyword id="KW-1185">Reference proteome</keyword>
<keyword id="KW-0686">Riboflavin biosynthesis</keyword>
<keyword id="KW-0862">Zinc</keyword>
<organism>
    <name type="scientific">Haemophilus influenzae (strain ATCC 51907 / DSM 11121 / KW20 / Rd)</name>
    <dbReference type="NCBI Taxonomy" id="71421"/>
    <lineage>
        <taxon>Bacteria</taxon>
        <taxon>Pseudomonadati</taxon>
        <taxon>Pseudomonadota</taxon>
        <taxon>Gammaproteobacteria</taxon>
        <taxon>Pasteurellales</taxon>
        <taxon>Pasteurellaceae</taxon>
        <taxon>Haemophilus</taxon>
    </lineage>
</organism>
<accession>P44571</accession>
<reference key="1">
    <citation type="journal article" date="1995" name="Science">
        <title>Whole-genome random sequencing and assembly of Haemophilus influenzae Rd.</title>
        <authorList>
            <person name="Fleischmann R.D."/>
            <person name="Adams M.D."/>
            <person name="White O."/>
            <person name="Clayton R.A."/>
            <person name="Kirkness E.F."/>
            <person name="Kerlavage A.R."/>
            <person name="Bult C.J."/>
            <person name="Tomb J.-F."/>
            <person name="Dougherty B.A."/>
            <person name="Merrick J.M."/>
            <person name="McKenney K."/>
            <person name="Sutton G.G."/>
            <person name="FitzHugh W."/>
            <person name="Fields C.A."/>
            <person name="Gocayne J.D."/>
            <person name="Scott J.D."/>
            <person name="Shirley R."/>
            <person name="Liu L.-I."/>
            <person name="Glodek A."/>
            <person name="Kelley J.M."/>
            <person name="Weidman J.F."/>
            <person name="Phillips C.A."/>
            <person name="Spriggs T."/>
            <person name="Hedblom E."/>
            <person name="Cotton M.D."/>
            <person name="Utterback T.R."/>
            <person name="Hanna M.C."/>
            <person name="Nguyen D.T."/>
            <person name="Saudek D.M."/>
            <person name="Brandon R.C."/>
            <person name="Fine L.D."/>
            <person name="Fritchman J.L."/>
            <person name="Fuhrmann J.L."/>
            <person name="Geoghagen N.S.M."/>
            <person name="Gnehm C.L."/>
            <person name="McDonald L.A."/>
            <person name="Small K.V."/>
            <person name="Fraser C.M."/>
            <person name="Smith H.O."/>
            <person name="Venter J.C."/>
        </authorList>
    </citation>
    <scope>NUCLEOTIDE SEQUENCE [LARGE SCALE GENOMIC DNA]</scope>
    <source>
        <strain>ATCC 51907 / DSM 11121 / KW20 / Rd</strain>
    </source>
</reference>
<name>RIBA_HAEIN</name>
<protein>
    <recommendedName>
        <fullName evidence="1">GTP cyclohydrolase-2</fullName>
        <ecNumber evidence="1">3.5.4.25</ecNumber>
    </recommendedName>
    <alternativeName>
        <fullName evidence="1">GTP cyclohydrolase II</fullName>
    </alternativeName>
</protein>
<gene>
    <name evidence="1" type="primary">ribA</name>
    <name type="ordered locus">HI_0212</name>
</gene>
<proteinExistence type="inferred from homology"/>
<comment type="function">
    <text evidence="1">Catalyzes the conversion of GTP to 2,5-diamino-6-ribosylamino-4(3H)-pyrimidinone 5'-phosphate (DARP), formate and pyrophosphate.</text>
</comment>
<comment type="catalytic activity">
    <reaction evidence="1">
        <text>GTP + 4 H2O = 2,5-diamino-6-hydroxy-4-(5-phosphoribosylamino)-pyrimidine + formate + 2 phosphate + 3 H(+)</text>
        <dbReference type="Rhea" id="RHEA:23704"/>
        <dbReference type="ChEBI" id="CHEBI:15377"/>
        <dbReference type="ChEBI" id="CHEBI:15378"/>
        <dbReference type="ChEBI" id="CHEBI:15740"/>
        <dbReference type="ChEBI" id="CHEBI:37565"/>
        <dbReference type="ChEBI" id="CHEBI:43474"/>
        <dbReference type="ChEBI" id="CHEBI:58614"/>
        <dbReference type="EC" id="3.5.4.25"/>
    </reaction>
</comment>
<comment type="cofactor">
    <cofactor evidence="1">
        <name>Zn(2+)</name>
        <dbReference type="ChEBI" id="CHEBI:29105"/>
    </cofactor>
    <text evidence="1">Binds 1 zinc ion per subunit.</text>
</comment>
<comment type="pathway">
    <text evidence="1">Cofactor biosynthesis; riboflavin biosynthesis; 5-amino-6-(D-ribitylamino)uracil from GTP: step 1/4.</text>
</comment>
<comment type="similarity">
    <text evidence="1">Belongs to the GTP cyclohydrolase II family.</text>
</comment>
<comment type="sequence caution" evidence="2">
    <conflict type="erroneous initiation">
        <sequence resource="EMBL-CDS" id="AAC21880"/>
    </conflict>
</comment>
<sequence>MAKIQLVAQANLPTEYGIFKMVGFEFPDTKKEHVALVMGDISNADEPVLARIHSECLTGDALHSLKCDCGFQLATALKQIQEEGRGVLIYHREEGRGIGLINKIRAYSLQDKGMDTIEANLALGFKADERNFEVCADMFELLGVKKVRLMTNNPEKVETMKKAGINVVERVPLNVGENRYNTKYLDTKAKKMGHYIVHNNDEQHLMTCPHCQEEII</sequence>